<evidence type="ECO:0000250" key="1"/>
<evidence type="ECO:0000256" key="2">
    <source>
        <dbReference type="SAM" id="MobiDB-lite"/>
    </source>
</evidence>
<evidence type="ECO:0000269" key="3">
    <source>
    </source>
</evidence>
<evidence type="ECO:0000305" key="4"/>
<evidence type="ECO:0007829" key="5">
    <source>
        <dbReference type="PDB" id="1DMG"/>
    </source>
</evidence>
<gene>
    <name type="primary">rplD</name>
    <name type="ordered locus">TM_1499</name>
</gene>
<protein>
    <recommendedName>
        <fullName evidence="4">Large ribosomal subunit protein uL4</fullName>
    </recommendedName>
    <alternativeName>
        <fullName>50S ribosomal protein L4</fullName>
    </alternativeName>
    <alternativeName>
        <fullName>TmaL4</fullName>
    </alternativeName>
</protein>
<organism>
    <name type="scientific">Thermotoga maritima (strain ATCC 43589 / DSM 3109 / JCM 10099 / NBRC 100826 / MSB8)</name>
    <dbReference type="NCBI Taxonomy" id="243274"/>
    <lineage>
        <taxon>Bacteria</taxon>
        <taxon>Thermotogati</taxon>
        <taxon>Thermotogota</taxon>
        <taxon>Thermotogae</taxon>
        <taxon>Thermotogales</taxon>
        <taxon>Thermotogaceae</taxon>
        <taxon>Thermotoga</taxon>
    </lineage>
</organism>
<accession>P38516</accession>
<name>RL4_THEMA</name>
<dbReference type="EMBL" id="Z21677">
    <property type="protein sequence ID" value="CAA79778.1"/>
    <property type="molecule type" value="Genomic_DNA"/>
</dbReference>
<dbReference type="EMBL" id="AE000512">
    <property type="protein sequence ID" value="AAD36565.1"/>
    <property type="molecule type" value="Genomic_DNA"/>
</dbReference>
<dbReference type="PIR" id="C72250">
    <property type="entry name" value="C72250"/>
</dbReference>
<dbReference type="RefSeq" id="NP_229299.1">
    <property type="nucleotide sequence ID" value="NC_000853.1"/>
</dbReference>
<dbReference type="RefSeq" id="WP_004081834.1">
    <property type="nucleotide sequence ID" value="NZ_CP011107.1"/>
</dbReference>
<dbReference type="PDB" id="1DMG">
    <property type="method" value="X-ray"/>
    <property type="resolution" value="1.70 A"/>
    <property type="chains" value="A=2-226"/>
</dbReference>
<dbReference type="PDBsum" id="1DMG"/>
<dbReference type="SMR" id="P38516"/>
<dbReference type="FunCoup" id="P38516">
    <property type="interactions" value="397"/>
</dbReference>
<dbReference type="STRING" id="243274.TM_1499"/>
<dbReference type="DrugBank" id="DB04272">
    <property type="generic name" value="Citric acid"/>
</dbReference>
<dbReference type="PaxDb" id="243274-THEMA_06805"/>
<dbReference type="EnsemblBacteria" id="AAD36565">
    <property type="protein sequence ID" value="AAD36565"/>
    <property type="gene ID" value="TM_1499"/>
</dbReference>
<dbReference type="KEGG" id="tma:TM1499"/>
<dbReference type="KEGG" id="tmi:THEMA_06805"/>
<dbReference type="KEGG" id="tmm:Tmari_1507"/>
<dbReference type="KEGG" id="tmw:THMA_1531"/>
<dbReference type="eggNOG" id="COG0088">
    <property type="taxonomic scope" value="Bacteria"/>
</dbReference>
<dbReference type="InParanoid" id="P38516"/>
<dbReference type="OrthoDB" id="9803201at2"/>
<dbReference type="EvolutionaryTrace" id="P38516"/>
<dbReference type="Proteomes" id="UP000008183">
    <property type="component" value="Chromosome"/>
</dbReference>
<dbReference type="GO" id="GO:1990904">
    <property type="term" value="C:ribonucleoprotein complex"/>
    <property type="evidence" value="ECO:0007669"/>
    <property type="project" value="UniProtKB-KW"/>
</dbReference>
<dbReference type="GO" id="GO:0005840">
    <property type="term" value="C:ribosome"/>
    <property type="evidence" value="ECO:0007669"/>
    <property type="project" value="UniProtKB-KW"/>
</dbReference>
<dbReference type="GO" id="GO:0003677">
    <property type="term" value="F:DNA binding"/>
    <property type="evidence" value="ECO:0000269"/>
    <property type="project" value="DisProt"/>
</dbReference>
<dbReference type="GO" id="GO:0019843">
    <property type="term" value="F:rRNA binding"/>
    <property type="evidence" value="ECO:0007669"/>
    <property type="project" value="UniProtKB-UniRule"/>
</dbReference>
<dbReference type="GO" id="GO:0003735">
    <property type="term" value="F:structural constituent of ribosome"/>
    <property type="evidence" value="ECO:0000318"/>
    <property type="project" value="GO_Central"/>
</dbReference>
<dbReference type="GO" id="GO:0006412">
    <property type="term" value="P:translation"/>
    <property type="evidence" value="ECO:0007669"/>
    <property type="project" value="UniProtKB-UniRule"/>
</dbReference>
<dbReference type="DisProt" id="DP01961"/>
<dbReference type="FunFam" id="3.40.1370.10:FF:000020">
    <property type="entry name" value="50S ribosomal protein L4"/>
    <property type="match status" value="1"/>
</dbReference>
<dbReference type="Gene3D" id="3.40.1370.10">
    <property type="match status" value="1"/>
</dbReference>
<dbReference type="HAMAP" id="MF_01328_B">
    <property type="entry name" value="Ribosomal_uL4_B"/>
    <property type="match status" value="1"/>
</dbReference>
<dbReference type="InterPro" id="IPR002136">
    <property type="entry name" value="Ribosomal_uL4"/>
</dbReference>
<dbReference type="InterPro" id="IPR013005">
    <property type="entry name" value="Ribosomal_uL4-like"/>
</dbReference>
<dbReference type="InterPro" id="IPR023574">
    <property type="entry name" value="Ribosomal_uL4_dom_sf"/>
</dbReference>
<dbReference type="NCBIfam" id="TIGR03953">
    <property type="entry name" value="rplD_bact"/>
    <property type="match status" value="1"/>
</dbReference>
<dbReference type="PANTHER" id="PTHR10746">
    <property type="entry name" value="50S RIBOSOMAL PROTEIN L4"/>
    <property type="match status" value="1"/>
</dbReference>
<dbReference type="PANTHER" id="PTHR10746:SF6">
    <property type="entry name" value="LARGE RIBOSOMAL SUBUNIT PROTEIN UL4M"/>
    <property type="match status" value="1"/>
</dbReference>
<dbReference type="Pfam" id="PF00573">
    <property type="entry name" value="Ribosomal_L4"/>
    <property type="match status" value="1"/>
</dbReference>
<dbReference type="SUPFAM" id="SSF52166">
    <property type="entry name" value="Ribosomal protein L4"/>
    <property type="match status" value="1"/>
</dbReference>
<sequence>MAQVDLLNVKGEKVGTLEISDFVFNIDPNYDVMWRYVDMQLSNRRAGTASTKTRGEVSGGGRKPWPQKHTGRARHGSIRSPIWRHGGVVHGPKPRDWSKKLNKKMKKLALRSALSVKYRENKLLVLDDLKLERPKTKSLKEILQNLQLSDKKTLIVLPWKEEGYMNVKLSGRNLPDVKVIIADNPNNSKNGEKAVRIDGLNVFDMLKYDYLVLTRDMVSKIEEVLGNEAGKALTA</sequence>
<proteinExistence type="evidence at protein level"/>
<comment type="function">
    <text evidence="1">One of the primary rRNA binding proteins, this protein initially binds near the 5'-end of the 23S rRNA. It is important during the early stages of 50S assembly. It makes multiple contacts with different domains of the 23S rRNA in the assembled 50S subunit and ribosome (By similarity).</text>
</comment>
<comment type="function">
    <text>This protein only weakly controls expression of the E.coli S10 operon. It is incorporated into E.coli ribosomes, however it is not as firmly associated as the endogenous protein.</text>
</comment>
<comment type="function">
    <text evidence="1">Forms part of the polypeptide exit tunnel.</text>
</comment>
<comment type="subunit">
    <text>Part of the 50S ribosomal subunit.</text>
</comment>
<comment type="domain">
    <text>The structure indicates that the N-terminal domain may bind to the 23S rRNA, while the C-terminal domain may bind to the mRNA, which could then be implicated in transcriptional and translational control of the S10 operon. However, it is not known if the S10 operon is controlled in this fashion in this organism.</text>
</comment>
<comment type="miscellaneous">
    <text>A protein containing 11 mutations, chosen as amino acids which probably interact with nucleic acids (K140A, E141Q, Q144K, Q147A, S149E, K151delta, K152delta, I155M, P158G, W159E and K160L), gained the ability to regulate the E.coli S10 operon, suggesting it is now able to mediate contacts of L4 with the S10 mRNA leader in E.coli. This mutant protein did not associate any better with E.coli ribosomes however, indicating a separation of residues interacting with rRNA and mRNA.</text>
</comment>
<comment type="similarity">
    <text evidence="4">Belongs to the universal ribosomal protein uL4 family.</text>
</comment>
<feature type="chain" id="PRO_0000129301" description="Large ribosomal subunit protein uL4">
    <location>
        <begin position="1"/>
        <end position="235"/>
    </location>
</feature>
<feature type="region of interest" description="Disordered" evidence="2">
    <location>
        <begin position="45"/>
        <end position="75"/>
    </location>
</feature>
<feature type="compositionally biased region" description="Basic residues" evidence="2">
    <location>
        <begin position="65"/>
        <end position="75"/>
    </location>
</feature>
<feature type="mutagenesis site" description="Able to regulate the E.coli S10 operon, but does not improve association with E.coli ribosome; when associated with E141Q, Q144K, Q147A, S149E, K151delta, K152delta, I155M, P158G, W159E and K160L." evidence="3">
    <original>K</original>
    <variation>A</variation>
    <location>
        <position position="140"/>
    </location>
</feature>
<feature type="mutagenesis site" description="Little change in either regulation of the E.coli S10 operon or ribosome assembly." evidence="3">
    <location>
        <begin position="163"/>
        <end position="165"/>
    </location>
</feature>
<feature type="mutagenesis site" description="Considerably improves stable incorporation into E.coli ribosomes, however no change in regulation of the E.coli S10 operon." evidence="3">
    <location>
        <begin position="184"/>
        <end position="198"/>
    </location>
</feature>
<feature type="sequence conflict" description="In Ref. 1; CAA79778." evidence="4" ref="1">
    <original>R</original>
    <variation>S</variation>
    <location>
        <position position="74"/>
    </location>
</feature>
<feature type="sequence conflict" description="In Ref. 1; CAA79778." evidence="4" ref="1">
    <original>D</original>
    <variation>H</variation>
    <location>
        <position position="128"/>
    </location>
</feature>
<feature type="sequence conflict" description="In Ref. 1; CAA79778." evidence="4" ref="1">
    <original>I</original>
    <variation>M</variation>
    <location>
        <position position="155"/>
    </location>
</feature>
<feature type="strand" evidence="5">
    <location>
        <begin position="3"/>
        <end position="7"/>
    </location>
</feature>
<feature type="strand" evidence="5">
    <location>
        <begin position="13"/>
        <end position="18"/>
    </location>
</feature>
<feature type="helix" evidence="5">
    <location>
        <begin position="21"/>
        <end position="24"/>
    </location>
</feature>
<feature type="helix" evidence="5">
    <location>
        <begin position="30"/>
        <end position="41"/>
    </location>
</feature>
<feature type="helix" evidence="5">
    <location>
        <begin position="97"/>
        <end position="119"/>
    </location>
</feature>
<feature type="strand" evidence="5">
    <location>
        <begin position="123"/>
        <end position="127"/>
    </location>
</feature>
<feature type="helix" evidence="5">
    <location>
        <begin position="136"/>
        <end position="145"/>
    </location>
</feature>
<feature type="strand" evidence="5">
    <location>
        <begin position="153"/>
        <end position="157"/>
    </location>
</feature>
<feature type="helix" evidence="5">
    <location>
        <begin position="162"/>
        <end position="171"/>
    </location>
</feature>
<feature type="strand" evidence="5">
    <location>
        <begin position="177"/>
        <end position="181"/>
    </location>
</feature>
<feature type="helix" evidence="5">
    <location>
        <begin position="202"/>
        <end position="207"/>
    </location>
</feature>
<feature type="strand" evidence="5">
    <location>
        <begin position="208"/>
        <end position="214"/>
    </location>
</feature>
<feature type="helix" evidence="5">
    <location>
        <begin position="215"/>
        <end position="225"/>
    </location>
</feature>
<keyword id="KW-0002">3D-structure</keyword>
<keyword id="KW-1185">Reference proteome</keyword>
<keyword id="KW-0687">Ribonucleoprotein</keyword>
<keyword id="KW-0689">Ribosomal protein</keyword>
<keyword id="KW-0694">RNA-binding</keyword>
<keyword id="KW-0699">rRNA-binding</keyword>
<reference key="1">
    <citation type="journal article" date="1994" name="J. Bacteriol.">
        <title>Phylogenetic depth of S10 and spc operons: cloning and sequencing of a ribosomal protein gene cluster from the extremely thermophilic bacterium Thermotoga maritima.</title>
        <authorList>
            <person name="Sanangelantoni A.M."/>
            <person name="Bocchetta M."/>
            <person name="Cammarano P."/>
            <person name="Tiboni O."/>
        </authorList>
    </citation>
    <scope>NUCLEOTIDE SEQUENCE [GENOMIC DNA]</scope>
    <source>
        <strain>ATCC 43589 / DSM 3109 / JCM 10099 / NBRC 100826 / MSB8</strain>
    </source>
</reference>
<reference key="2">
    <citation type="journal article" date="1999" name="Nature">
        <title>Evidence for lateral gene transfer between Archaea and Bacteria from genome sequence of Thermotoga maritima.</title>
        <authorList>
            <person name="Nelson K.E."/>
            <person name="Clayton R.A."/>
            <person name="Gill S.R."/>
            <person name="Gwinn M.L."/>
            <person name="Dodson R.J."/>
            <person name="Haft D.H."/>
            <person name="Hickey E.K."/>
            <person name="Peterson J.D."/>
            <person name="Nelson W.C."/>
            <person name="Ketchum K.A."/>
            <person name="McDonald L.A."/>
            <person name="Utterback T.R."/>
            <person name="Malek J.A."/>
            <person name="Linher K.D."/>
            <person name="Garrett M.M."/>
            <person name="Stewart A.M."/>
            <person name="Cotton M.D."/>
            <person name="Pratt M.S."/>
            <person name="Phillips C.A."/>
            <person name="Richardson D.L."/>
            <person name="Heidelberg J.F."/>
            <person name="Sutton G.G."/>
            <person name="Fleischmann R.D."/>
            <person name="Eisen J.A."/>
            <person name="White O."/>
            <person name="Salzberg S.L."/>
            <person name="Smith H.O."/>
            <person name="Venter J.C."/>
            <person name="Fraser C.M."/>
        </authorList>
    </citation>
    <scope>NUCLEOTIDE SEQUENCE [LARGE SCALE GENOMIC DNA]</scope>
    <source>
        <strain>ATCC 43589 / DSM 3109 / JCM 10099 / NBRC 100826 / MSB8</strain>
    </source>
</reference>
<reference key="3">
    <citation type="journal article" date="2002" name="Biochimie">
        <title>Comparative anatomy of a regulatory ribosomal protein.</title>
        <authorList>
            <person name="Worbs M."/>
            <person name="Wahl M.C."/>
            <person name="Lindahl L."/>
            <person name="Zengel J.M."/>
        </authorList>
    </citation>
    <scope>MUTAGENESIS OF LOOPS SPECIFIC TO T.MARITIMA AND NUCLEIC ACID-BINDING RESIDUES</scope>
    <scope>REPLACEMENT STUDIES IN E.COLI</scope>
</reference>
<reference key="4">
    <citation type="journal article" date="2000" name="EMBO J.">
        <title>Crystal structure of ribosomal protein L4 shows RNA-binding sites for ribosome incorporation and feedback control of the S10 operon.</title>
        <authorList>
            <person name="Worbs M."/>
            <person name="Huber R."/>
            <person name="Wahl M.C."/>
        </authorList>
    </citation>
    <scope>X-RAY CRYSTALLOGRAPHY (1.7 ANGSTROMS) OF 2-226</scope>
</reference>